<gene>
    <name type="primary">KS1</name>
    <name type="synonym">KS1A</name>
    <name type="ordered locus">Os04g0611800</name>
    <name type="ordered locus">LOC_Os04g52230</name>
    <name type="ORF">OSJNBa0070C17.8</name>
</gene>
<proteinExistence type="evidence at protein level"/>
<evidence type="ECO:0000250" key="1"/>
<evidence type="ECO:0000255" key="2"/>
<evidence type="ECO:0000269" key="3">
    <source>
    </source>
</evidence>
<evidence type="ECO:0000269" key="4">
    <source>
    </source>
</evidence>
<evidence type="ECO:0000305" key="5"/>
<protein>
    <recommendedName>
        <fullName>Ent-kaur-16-ene synthase, chloroplastic</fullName>
        <ecNumber>4.2.3.19</ecNumber>
    </recommendedName>
    <alternativeName>
        <fullName>Ent-kaurene synthase B</fullName>
    </alternativeName>
    <alternativeName>
        <fullName>Kaurene synthase 1</fullName>
        <shortName>OsKS1</shortName>
    </alternativeName>
</protein>
<organism>
    <name type="scientific">Oryza sativa subsp. japonica</name>
    <name type="common">Rice</name>
    <dbReference type="NCBI Taxonomy" id="39947"/>
    <lineage>
        <taxon>Eukaryota</taxon>
        <taxon>Viridiplantae</taxon>
        <taxon>Streptophyta</taxon>
        <taxon>Embryophyta</taxon>
        <taxon>Tracheophyta</taxon>
        <taxon>Spermatophyta</taxon>
        <taxon>Magnoliopsida</taxon>
        <taxon>Liliopsida</taxon>
        <taxon>Poales</taxon>
        <taxon>Poaceae</taxon>
        <taxon>BOP clade</taxon>
        <taxon>Oryzoideae</taxon>
        <taxon>Oryzeae</taxon>
        <taxon>Oryzinae</taxon>
        <taxon>Oryza</taxon>
        <taxon>Oryza sativa</taxon>
    </lineage>
</organism>
<dbReference type="EC" id="4.2.3.19"/>
<dbReference type="EMBL" id="AY347876">
    <property type="protein sequence ID" value="AAQ72559.1"/>
    <property type="molecule type" value="mRNA"/>
</dbReference>
<dbReference type="EMBL" id="AB126933">
    <property type="protein sequence ID" value="BAE72099.1"/>
    <property type="status" value="ALT_SEQ"/>
    <property type="molecule type" value="mRNA"/>
</dbReference>
<dbReference type="EMBL" id="AL731610">
    <property type="protein sequence ID" value="CAE05201.3"/>
    <property type="status" value="ALT_SEQ"/>
    <property type="molecule type" value="Genomic_DNA"/>
</dbReference>
<dbReference type="EMBL" id="AP008210">
    <property type="protein sequence ID" value="BAF15755.1"/>
    <property type="molecule type" value="Genomic_DNA"/>
</dbReference>
<dbReference type="EMBL" id="AP014960">
    <property type="protein sequence ID" value="BAS90962.1"/>
    <property type="molecule type" value="Genomic_DNA"/>
</dbReference>
<dbReference type="SMR" id="Q0JA82"/>
<dbReference type="FunCoup" id="Q0JA82">
    <property type="interactions" value="726"/>
</dbReference>
<dbReference type="STRING" id="39947.Q0JA82"/>
<dbReference type="PaxDb" id="39947-Q0JA82"/>
<dbReference type="EnsemblPlants" id="Os04t0611800-00">
    <property type="protein sequence ID" value="Os04t0611800-00"/>
    <property type="gene ID" value="Os04g0611800"/>
</dbReference>
<dbReference type="Gramene" id="Os04t0611800-00">
    <property type="protein sequence ID" value="Os04t0611800-00"/>
    <property type="gene ID" value="Os04g0611800"/>
</dbReference>
<dbReference type="KEGG" id="dosa:Os04g0611800"/>
<dbReference type="eggNOG" id="ENOG502QVGX">
    <property type="taxonomic scope" value="Eukaryota"/>
</dbReference>
<dbReference type="HOGENOM" id="CLU_003125_2_0_1"/>
<dbReference type="InParanoid" id="Q0JA82"/>
<dbReference type="OMA" id="ELSNWPI"/>
<dbReference type="BRENDA" id="4.2.3.19">
    <property type="organism ID" value="8948"/>
</dbReference>
<dbReference type="PlantReactome" id="R-OSA-1119348">
    <property type="pathway name" value="Ent-kaurene biosynthesis"/>
</dbReference>
<dbReference type="UniPathway" id="UPA00390"/>
<dbReference type="Proteomes" id="UP000000763">
    <property type="component" value="Chromosome 4"/>
</dbReference>
<dbReference type="Proteomes" id="UP000059680">
    <property type="component" value="Chromosome 4"/>
</dbReference>
<dbReference type="GO" id="GO:0009507">
    <property type="term" value="C:chloroplast"/>
    <property type="evidence" value="ECO:0007669"/>
    <property type="project" value="UniProtKB-SubCell"/>
</dbReference>
<dbReference type="GO" id="GO:0009899">
    <property type="term" value="F:ent-kaurene synthase activity"/>
    <property type="evidence" value="ECO:0007669"/>
    <property type="project" value="UniProtKB-EC"/>
</dbReference>
<dbReference type="GO" id="GO:0000287">
    <property type="term" value="F:magnesium ion binding"/>
    <property type="evidence" value="ECO:0000318"/>
    <property type="project" value="GO_Central"/>
</dbReference>
<dbReference type="GO" id="GO:0010333">
    <property type="term" value="F:terpene synthase activity"/>
    <property type="evidence" value="ECO:0000318"/>
    <property type="project" value="GO_Central"/>
</dbReference>
<dbReference type="GO" id="GO:0016102">
    <property type="term" value="P:diterpenoid biosynthetic process"/>
    <property type="evidence" value="ECO:0000318"/>
    <property type="project" value="GO_Central"/>
</dbReference>
<dbReference type="GO" id="GO:0009686">
    <property type="term" value="P:gibberellin biosynthetic process"/>
    <property type="evidence" value="ECO:0007669"/>
    <property type="project" value="UniProtKB-UniPathway"/>
</dbReference>
<dbReference type="CDD" id="cd00684">
    <property type="entry name" value="Terpene_cyclase_plant_C1"/>
    <property type="match status" value="1"/>
</dbReference>
<dbReference type="FunFam" id="1.50.10.160:FF:000002">
    <property type="entry name" value="cis-abienol synthase, chloroplastic"/>
    <property type="match status" value="1"/>
</dbReference>
<dbReference type="FunFam" id="1.50.10.130:FF:000003">
    <property type="entry name" value="Ent-cassa-12,15-diene synthase"/>
    <property type="match status" value="1"/>
</dbReference>
<dbReference type="FunFam" id="1.10.600.10:FF:000005">
    <property type="entry name" value="Ent-kaur-16-ene synthase, chloroplastic"/>
    <property type="match status" value="1"/>
</dbReference>
<dbReference type="Gene3D" id="1.50.10.160">
    <property type="match status" value="1"/>
</dbReference>
<dbReference type="Gene3D" id="1.10.600.10">
    <property type="entry name" value="Farnesyl Diphosphate Synthase"/>
    <property type="match status" value="1"/>
</dbReference>
<dbReference type="Gene3D" id="1.50.10.130">
    <property type="entry name" value="Terpene synthase, N-terminal domain"/>
    <property type="match status" value="1"/>
</dbReference>
<dbReference type="InterPro" id="IPR008949">
    <property type="entry name" value="Isoprenoid_synthase_dom_sf"/>
</dbReference>
<dbReference type="InterPro" id="IPR044814">
    <property type="entry name" value="Terpene_cyclase_plant_C1"/>
</dbReference>
<dbReference type="InterPro" id="IPR001906">
    <property type="entry name" value="Terpene_synth_N"/>
</dbReference>
<dbReference type="InterPro" id="IPR036965">
    <property type="entry name" value="Terpene_synth_N_sf"/>
</dbReference>
<dbReference type="InterPro" id="IPR050148">
    <property type="entry name" value="Terpene_synthase-like"/>
</dbReference>
<dbReference type="InterPro" id="IPR005630">
    <property type="entry name" value="Terpene_synthase_metal-bd"/>
</dbReference>
<dbReference type="InterPro" id="IPR008930">
    <property type="entry name" value="Terpenoid_cyclase/PrenylTrfase"/>
</dbReference>
<dbReference type="PANTHER" id="PTHR31739">
    <property type="entry name" value="ENT-COPALYL DIPHOSPHATE SYNTHASE, CHLOROPLASTIC"/>
    <property type="match status" value="1"/>
</dbReference>
<dbReference type="PANTHER" id="PTHR31739:SF3">
    <property type="entry name" value="ENT-KAUR-16-ENE SYNTHASE, CHLOROPLASTIC"/>
    <property type="match status" value="1"/>
</dbReference>
<dbReference type="Pfam" id="PF01397">
    <property type="entry name" value="Terpene_synth"/>
    <property type="match status" value="1"/>
</dbReference>
<dbReference type="Pfam" id="PF03936">
    <property type="entry name" value="Terpene_synth_C"/>
    <property type="match status" value="1"/>
</dbReference>
<dbReference type="SFLD" id="SFLDG01014">
    <property type="entry name" value="Terpene_Cyclase_Like_1_N-term"/>
    <property type="match status" value="1"/>
</dbReference>
<dbReference type="SUPFAM" id="SSF48239">
    <property type="entry name" value="Terpenoid cyclases/Protein prenyltransferases"/>
    <property type="match status" value="2"/>
</dbReference>
<dbReference type="SUPFAM" id="SSF48576">
    <property type="entry name" value="Terpenoid synthases"/>
    <property type="match status" value="1"/>
</dbReference>
<sequence>MQHRKELQARTRDQLQTLELSTSLYDTAWVAMVPLRGSRQHPCFPQCVEWILQNQQDDGSWGTRGFGVAVTRDVLSSTLACVLALKRWNVGQEHIRRGLDFIGRNFSIAMDEQIAAPVGFNITFPGMLSLAMGMDLEFPVRQTDVDRLLHLREIELEREAGDHSYGRKAYMAYVTEGLGNLLEWDEIMMFQRKNGSFFNCPSTTAATLVNHYNDKALQYLNCLVSKFGSAVPTVYPLNIYCQLSWVDALEKMGISQYFVSEIKSILDTTYVSWLERDEEIMLDITTCAMAFRLLRMNGYHVSSVELSPVAEASSFRESLQGYLNDKKSLIELYKASKVSKSENESILDSIGSWSGSLLKESVCSNGVKKAPIFEEMKYALKFPFYTTLDRLDHKRNIERFDAKDSQMLKTEYLLPHANQDILALAVEDFSSSQSIYQDELNYLECWVKDEKLDQLPFARQKLTYCYLSAAATIFPRELSEARIAWAKNGVLTTVVDDFFDLGGSKEELENLIALVEKWDGHQEEFYSEQVRIVFSAIYTTVNQLGAKASALQGRDVTKHLTEIWLCLMRSMMTEAEWQRTKYVPTMEEYMANAVVSFALGPIVLPTLYFVGPKLQEDVVRDHEYNELFRLMSTCGRLLNDSQGFERESLEGKLNSVSLLVHHSGGSISIDEAKMKAQKSIDTSRRNLLRLVLGEQGAVPRPCKQLFWKMCKIVHMFYSRTDGFSSPKEMVSAVNAVVKEPLKLKVSDPYGSILSGN</sequence>
<accession>Q0JA82</accession>
<accession>A0A0P0WEN8</accession>
<accession>Q2PHF3</accession>
<accession>Q69DT1</accession>
<accession>Q7XLE0</accession>
<comment type="function">
    <text>Catalyzes the conversion of ent-copalyl diphosphate to the gibberellin precursor ent-kaur-16-ene.</text>
</comment>
<comment type="catalytic activity">
    <reaction evidence="4">
        <text>ent-copalyl diphosphate = ent-kaur-16-ene + diphosphate</text>
        <dbReference type="Rhea" id="RHEA:22220"/>
        <dbReference type="ChEBI" id="CHEBI:15415"/>
        <dbReference type="ChEBI" id="CHEBI:33019"/>
        <dbReference type="ChEBI" id="CHEBI:58553"/>
        <dbReference type="EC" id="4.2.3.19"/>
    </reaction>
</comment>
<comment type="cofactor">
    <cofactor evidence="1">
        <name>Mg(2+)</name>
        <dbReference type="ChEBI" id="CHEBI:18420"/>
    </cofactor>
    <text evidence="1">Binds 3 Mg(2+) ions per subunit.</text>
</comment>
<comment type="pathway">
    <text>Plant hormone biosynthesis; gibberellin biosynthesis.</text>
</comment>
<comment type="subcellular location">
    <subcellularLocation>
        <location evidence="5">Plastid</location>
        <location evidence="5">Chloroplast</location>
    </subcellularLocation>
</comment>
<comment type="tissue specificity">
    <text evidence="3">Highly expressed in panicles and at lower levels in leaves and stems.</text>
</comment>
<comment type="domain">
    <text>The Asp-Asp-Xaa-Xaa-Asp/Glu (DDXXD/E) motif is important for the catalytic activity, presumably through binding to Mg(2+).</text>
</comment>
<comment type="miscellaneous">
    <text>Plants lacking KS1 display a dwarf phenotype with normal root development, but severe stunting of shoots in seedlings, dark green leaves and failure to initiate flowering. This phenotype can be rescued by treatment with exogenous gibberellin.</text>
</comment>
<comment type="similarity">
    <text evidence="5">Belongs to the terpene synthase family.</text>
</comment>
<comment type="sequence caution" evidence="5">
    <conflict type="miscellaneous discrepancy">
        <sequence resource="EMBL-CDS" id="BAE72099"/>
    </conflict>
    <text>Sequencing errors.</text>
</comment>
<comment type="sequence caution" evidence="5">
    <conflict type="erroneous gene model prediction">
        <sequence resource="EMBL-CDS" id="CAE05201"/>
    </conflict>
</comment>
<keyword id="KW-0150">Chloroplast</keyword>
<keyword id="KW-0456">Lyase</keyword>
<keyword id="KW-0460">Magnesium</keyword>
<keyword id="KW-0479">Metal-binding</keyword>
<keyword id="KW-0934">Plastid</keyword>
<keyword id="KW-1185">Reference proteome</keyword>
<keyword id="KW-0809">Transit peptide</keyword>
<feature type="transit peptide" description="Chloroplast" evidence="2">
    <location>
        <begin position="1"/>
        <end status="unknown"/>
    </location>
</feature>
<feature type="chain" id="PRO_0000372312" description="Ent-kaur-16-ene synthase, chloroplastic">
    <location>
        <begin status="unknown"/>
        <end position="756"/>
    </location>
</feature>
<feature type="short sequence motif" description="DDXXD motif">
    <location>
        <begin position="496"/>
        <end position="500"/>
    </location>
</feature>
<feature type="binding site" evidence="1">
    <location>
        <position position="496"/>
    </location>
    <ligand>
        <name>Mg(2+)</name>
        <dbReference type="ChEBI" id="CHEBI:18420"/>
        <label>1</label>
    </ligand>
</feature>
<feature type="binding site" evidence="1">
    <location>
        <position position="496"/>
    </location>
    <ligand>
        <name>Mg(2+)</name>
        <dbReference type="ChEBI" id="CHEBI:18420"/>
        <label>2</label>
    </ligand>
</feature>
<feature type="binding site" evidence="1">
    <location>
        <position position="500"/>
    </location>
    <ligand>
        <name>Mg(2+)</name>
        <dbReference type="ChEBI" id="CHEBI:18420"/>
        <label>1</label>
    </ligand>
</feature>
<feature type="binding site" evidence="1">
    <location>
        <position position="500"/>
    </location>
    <ligand>
        <name>Mg(2+)</name>
        <dbReference type="ChEBI" id="CHEBI:18420"/>
        <label>2</label>
    </ligand>
</feature>
<feature type="binding site" evidence="1">
    <location>
        <position position="639"/>
    </location>
    <ligand>
        <name>Mg(2+)</name>
        <dbReference type="ChEBI" id="CHEBI:18420"/>
        <label>3</label>
    </ligand>
</feature>
<feature type="binding site" evidence="1">
    <location>
        <position position="647"/>
    </location>
    <ligand>
        <name>Mg(2+)</name>
        <dbReference type="ChEBI" id="CHEBI:18420"/>
        <label>3</label>
    </ligand>
</feature>
<feature type="mutagenesis site" description="Changes catalytic activity. Converts ent-copalyl diphosphate to ent-pimara-8(14),15-diene and diphosphate." evidence="4">
    <original>I</original>
    <variation>T</variation>
    <location>
        <position position="602"/>
    </location>
</feature>
<feature type="sequence conflict" description="In Ref. 1; AAQ72559." evidence="5" ref="1">
    <original>C</original>
    <variation>S</variation>
    <location>
        <position position="363"/>
    </location>
</feature>
<reference key="1">
    <citation type="journal article" date="2005" name="Plant Cell Rep.">
        <title>Isolation and characterization of a Ds-tagged rice (Oryza sativa L.) GA-responsive dwarf mutant defective in an early step of the gibberellin biosynthesis pathway.</title>
        <authorList>
            <person name="Margis-Pinheiro M."/>
            <person name="Zhou X.-R."/>
            <person name="Zhu Q.-H."/>
            <person name="Dennis E.S."/>
            <person name="Upadhyaya N.M."/>
        </authorList>
    </citation>
    <scope>NUCLEOTIDE SEQUENCE [MRNA]</scope>
    <scope>TISSUE SPECIFICITY</scope>
    <source>
        <strain>cv. Nipponbare</strain>
    </source>
</reference>
<reference key="2">
    <citation type="submission" date="2003-11" db="EMBL/GenBank/DDBJ databases">
        <title>Rice diterpene cyclases.</title>
        <authorList>
            <person name="Toyomasu T."/>
            <person name="Otomo K."/>
            <person name="Kanno Y."/>
            <person name="Mitsuhashi W."/>
            <person name="Sassa T."/>
        </authorList>
    </citation>
    <scope>NUCLEOTIDE SEQUENCE [MRNA]</scope>
    <source>
        <strain>cv. Nipponbare</strain>
    </source>
</reference>
<reference key="3">
    <citation type="journal article" date="2002" name="Nature">
        <title>Sequence and analysis of rice chromosome 4.</title>
        <authorList>
            <person name="Feng Q."/>
            <person name="Zhang Y."/>
            <person name="Hao P."/>
            <person name="Wang S."/>
            <person name="Fu G."/>
            <person name="Huang Y."/>
            <person name="Li Y."/>
            <person name="Zhu J."/>
            <person name="Liu Y."/>
            <person name="Hu X."/>
            <person name="Jia P."/>
            <person name="Zhang Y."/>
            <person name="Zhao Q."/>
            <person name="Ying K."/>
            <person name="Yu S."/>
            <person name="Tang Y."/>
            <person name="Weng Q."/>
            <person name="Zhang L."/>
            <person name="Lu Y."/>
            <person name="Mu J."/>
            <person name="Lu Y."/>
            <person name="Zhang L.S."/>
            <person name="Yu Z."/>
            <person name="Fan D."/>
            <person name="Liu X."/>
            <person name="Lu T."/>
            <person name="Li C."/>
            <person name="Wu Y."/>
            <person name="Sun T."/>
            <person name="Lei H."/>
            <person name="Li T."/>
            <person name="Hu H."/>
            <person name="Guan J."/>
            <person name="Wu M."/>
            <person name="Zhang R."/>
            <person name="Zhou B."/>
            <person name="Chen Z."/>
            <person name="Chen L."/>
            <person name="Jin Z."/>
            <person name="Wang R."/>
            <person name="Yin H."/>
            <person name="Cai Z."/>
            <person name="Ren S."/>
            <person name="Lv G."/>
            <person name="Gu W."/>
            <person name="Zhu G."/>
            <person name="Tu Y."/>
            <person name="Jia J."/>
            <person name="Zhang Y."/>
            <person name="Chen J."/>
            <person name="Kang H."/>
            <person name="Chen X."/>
            <person name="Shao C."/>
            <person name="Sun Y."/>
            <person name="Hu Q."/>
            <person name="Zhang X."/>
            <person name="Zhang W."/>
            <person name="Wang L."/>
            <person name="Ding C."/>
            <person name="Sheng H."/>
            <person name="Gu J."/>
            <person name="Chen S."/>
            <person name="Ni L."/>
            <person name="Zhu F."/>
            <person name="Chen W."/>
            <person name="Lan L."/>
            <person name="Lai Y."/>
            <person name="Cheng Z."/>
            <person name="Gu M."/>
            <person name="Jiang J."/>
            <person name="Li J."/>
            <person name="Hong G."/>
            <person name="Xue Y."/>
            <person name="Han B."/>
        </authorList>
    </citation>
    <scope>NUCLEOTIDE SEQUENCE [LARGE SCALE GENOMIC DNA]</scope>
    <source>
        <strain>cv. Nipponbare</strain>
    </source>
</reference>
<reference key="4">
    <citation type="journal article" date="2005" name="Nature">
        <title>The map-based sequence of the rice genome.</title>
        <authorList>
            <consortium name="International rice genome sequencing project (IRGSP)"/>
        </authorList>
    </citation>
    <scope>NUCLEOTIDE SEQUENCE [LARGE SCALE GENOMIC DNA]</scope>
    <source>
        <strain>cv. Nipponbare</strain>
    </source>
</reference>
<reference key="5">
    <citation type="journal article" date="2008" name="Nucleic Acids Res.">
        <title>The rice annotation project database (RAP-DB): 2008 update.</title>
        <authorList>
            <consortium name="The rice annotation project (RAP)"/>
        </authorList>
    </citation>
    <scope>GENOME REANNOTATION</scope>
    <source>
        <strain>cv. Nipponbare</strain>
    </source>
</reference>
<reference key="6">
    <citation type="journal article" date="2013" name="Rice">
        <title>Improvement of the Oryza sativa Nipponbare reference genome using next generation sequence and optical map data.</title>
        <authorList>
            <person name="Kawahara Y."/>
            <person name="de la Bastide M."/>
            <person name="Hamilton J.P."/>
            <person name="Kanamori H."/>
            <person name="McCombie W.R."/>
            <person name="Ouyang S."/>
            <person name="Schwartz D.C."/>
            <person name="Tanaka T."/>
            <person name="Wu J."/>
            <person name="Zhou S."/>
            <person name="Childs K.L."/>
            <person name="Davidson R.M."/>
            <person name="Lin H."/>
            <person name="Quesada-Ocampo L."/>
            <person name="Vaillancourt B."/>
            <person name="Sakai H."/>
            <person name="Lee S.S."/>
            <person name="Kim J."/>
            <person name="Numa H."/>
            <person name="Itoh T."/>
            <person name="Buell C.R."/>
            <person name="Matsumoto T."/>
        </authorList>
    </citation>
    <scope>GENOME REANNOTATION</scope>
    <source>
        <strain>cv. Nipponbare</strain>
    </source>
</reference>
<reference key="7">
    <citation type="journal article" date="2007" name="Proc. Natl. Acad. Sci. U.S.A.">
        <title>Following evolution's lead to a single residue switch for diterpene synthase product outcome.</title>
        <authorList>
            <person name="Xu M."/>
            <person name="Wilderman P.R."/>
            <person name="Peters R.J."/>
        </authorList>
    </citation>
    <scope>CATALYTIC ACTIVITY</scope>
    <scope>MUTAGENESIS OF ILE-602</scope>
</reference>
<name>KS1_ORYSJ</name>